<gene>
    <name evidence="1" type="primary">prfA</name>
    <name type="ordered locus">SO_3833</name>
</gene>
<proteinExistence type="inferred from homology"/>
<dbReference type="EMBL" id="AE014299">
    <property type="protein sequence ID" value="AAN56810.1"/>
    <property type="molecule type" value="Genomic_DNA"/>
</dbReference>
<dbReference type="RefSeq" id="NP_719366.1">
    <property type="nucleotide sequence ID" value="NC_004347.2"/>
</dbReference>
<dbReference type="RefSeq" id="WP_011073597.1">
    <property type="nucleotide sequence ID" value="NC_004347.2"/>
</dbReference>
<dbReference type="SMR" id="Q8EAR3"/>
<dbReference type="STRING" id="211586.SO_3833"/>
<dbReference type="PaxDb" id="211586-SO_3833"/>
<dbReference type="KEGG" id="son:SO_3833"/>
<dbReference type="PATRIC" id="fig|211586.12.peg.3721"/>
<dbReference type="eggNOG" id="COG0216">
    <property type="taxonomic scope" value="Bacteria"/>
</dbReference>
<dbReference type="HOGENOM" id="CLU_036856_0_1_6"/>
<dbReference type="OrthoDB" id="9806673at2"/>
<dbReference type="PhylomeDB" id="Q8EAR3"/>
<dbReference type="BioCyc" id="SONE211586:G1GMP-3558-MONOMER"/>
<dbReference type="Proteomes" id="UP000008186">
    <property type="component" value="Chromosome"/>
</dbReference>
<dbReference type="GO" id="GO:0005737">
    <property type="term" value="C:cytoplasm"/>
    <property type="evidence" value="ECO:0007669"/>
    <property type="project" value="UniProtKB-SubCell"/>
</dbReference>
<dbReference type="GO" id="GO:0016149">
    <property type="term" value="F:translation release factor activity, codon specific"/>
    <property type="evidence" value="ECO:0007669"/>
    <property type="project" value="UniProtKB-UniRule"/>
</dbReference>
<dbReference type="FunFam" id="3.30.160.20:FF:000004">
    <property type="entry name" value="Peptide chain release factor 1"/>
    <property type="match status" value="1"/>
</dbReference>
<dbReference type="FunFam" id="3.30.70.1660:FF:000002">
    <property type="entry name" value="Peptide chain release factor 1"/>
    <property type="match status" value="1"/>
</dbReference>
<dbReference type="FunFam" id="3.30.70.1660:FF:000004">
    <property type="entry name" value="Peptide chain release factor 1"/>
    <property type="match status" value="1"/>
</dbReference>
<dbReference type="Gene3D" id="3.30.160.20">
    <property type="match status" value="1"/>
</dbReference>
<dbReference type="Gene3D" id="3.30.70.1660">
    <property type="match status" value="2"/>
</dbReference>
<dbReference type="Gene3D" id="6.10.140.1950">
    <property type="match status" value="1"/>
</dbReference>
<dbReference type="HAMAP" id="MF_00093">
    <property type="entry name" value="Rel_fac_1"/>
    <property type="match status" value="1"/>
</dbReference>
<dbReference type="InterPro" id="IPR005139">
    <property type="entry name" value="PCRF"/>
</dbReference>
<dbReference type="InterPro" id="IPR000352">
    <property type="entry name" value="Pep_chain_release_fac_I"/>
</dbReference>
<dbReference type="InterPro" id="IPR045853">
    <property type="entry name" value="Pep_chain_release_fac_I_sf"/>
</dbReference>
<dbReference type="InterPro" id="IPR050057">
    <property type="entry name" value="Prokaryotic/Mito_RF"/>
</dbReference>
<dbReference type="InterPro" id="IPR004373">
    <property type="entry name" value="RF-1"/>
</dbReference>
<dbReference type="NCBIfam" id="TIGR00019">
    <property type="entry name" value="prfA"/>
    <property type="match status" value="1"/>
</dbReference>
<dbReference type="NCBIfam" id="NF001859">
    <property type="entry name" value="PRK00591.1"/>
    <property type="match status" value="1"/>
</dbReference>
<dbReference type="PANTHER" id="PTHR43804">
    <property type="entry name" value="LD18447P"/>
    <property type="match status" value="1"/>
</dbReference>
<dbReference type="PANTHER" id="PTHR43804:SF7">
    <property type="entry name" value="LD18447P"/>
    <property type="match status" value="1"/>
</dbReference>
<dbReference type="Pfam" id="PF03462">
    <property type="entry name" value="PCRF"/>
    <property type="match status" value="1"/>
</dbReference>
<dbReference type="Pfam" id="PF00472">
    <property type="entry name" value="RF-1"/>
    <property type="match status" value="1"/>
</dbReference>
<dbReference type="SMART" id="SM00937">
    <property type="entry name" value="PCRF"/>
    <property type="match status" value="1"/>
</dbReference>
<dbReference type="SUPFAM" id="SSF75620">
    <property type="entry name" value="Release factor"/>
    <property type="match status" value="1"/>
</dbReference>
<dbReference type="PROSITE" id="PS00745">
    <property type="entry name" value="RF_PROK_I"/>
    <property type="match status" value="1"/>
</dbReference>
<keyword id="KW-0963">Cytoplasm</keyword>
<keyword id="KW-0488">Methylation</keyword>
<keyword id="KW-0648">Protein biosynthesis</keyword>
<keyword id="KW-1185">Reference proteome</keyword>
<sequence>MKESVIRKLEGLLERNEEVLALLGDASVIADQDRFRALSKEYSQLEEVVAGFKAYQQAQADLESAKEMLEEDDAEMREMAQEEIKAAKVELERLEAELQILLLPKDPNDDTNAFIEIRAGAGGDEAAIFAGDLFRMYSRYAEANRWQLEIMSSNEGEHGGFKEIIVKVSGEGAYGKLKFESGGHRVQRVPETESQGRVHTSAVTVVVMHEVPEAEAISINPADLKVDTFRSSGAGGQHVNKTDSAIRITHIPTGIVVECQDQRSQHKNRAQAMSVLAARIQAVEDEKRRSAEESTRRSLVASGDRSERVRTYNFPQGRVSEHRINLTLYRLNEVMEGDLDAILGPLMQEHQADLLAALADEQG</sequence>
<accession>Q8EAR3</accession>
<organism>
    <name type="scientific">Shewanella oneidensis (strain ATCC 700550 / JCM 31522 / CIP 106686 / LMG 19005 / NCIMB 14063 / MR-1)</name>
    <dbReference type="NCBI Taxonomy" id="211586"/>
    <lineage>
        <taxon>Bacteria</taxon>
        <taxon>Pseudomonadati</taxon>
        <taxon>Pseudomonadota</taxon>
        <taxon>Gammaproteobacteria</taxon>
        <taxon>Alteromonadales</taxon>
        <taxon>Shewanellaceae</taxon>
        <taxon>Shewanella</taxon>
    </lineage>
</organism>
<comment type="function">
    <text evidence="1">Peptide chain release factor 1 directs the termination of translation in response to the peptide chain termination codons UAG and UAA.</text>
</comment>
<comment type="subcellular location">
    <subcellularLocation>
        <location evidence="1">Cytoplasm</location>
    </subcellularLocation>
</comment>
<comment type="PTM">
    <text evidence="1">Methylated by PrmC. Methylation increases the termination efficiency of RF1.</text>
</comment>
<comment type="similarity">
    <text evidence="1">Belongs to the prokaryotic/mitochondrial release factor family.</text>
</comment>
<protein>
    <recommendedName>
        <fullName evidence="1">Peptide chain release factor 1</fullName>
        <shortName evidence="1">RF-1</shortName>
    </recommendedName>
</protein>
<reference key="1">
    <citation type="journal article" date="2002" name="Nat. Biotechnol.">
        <title>Genome sequence of the dissimilatory metal ion-reducing bacterium Shewanella oneidensis.</title>
        <authorList>
            <person name="Heidelberg J.F."/>
            <person name="Paulsen I.T."/>
            <person name="Nelson K.E."/>
            <person name="Gaidos E.J."/>
            <person name="Nelson W.C."/>
            <person name="Read T.D."/>
            <person name="Eisen J.A."/>
            <person name="Seshadri R."/>
            <person name="Ward N.L."/>
            <person name="Methe B.A."/>
            <person name="Clayton R.A."/>
            <person name="Meyer T."/>
            <person name="Tsapin A."/>
            <person name="Scott J."/>
            <person name="Beanan M.J."/>
            <person name="Brinkac L.M."/>
            <person name="Daugherty S.C."/>
            <person name="DeBoy R.T."/>
            <person name="Dodson R.J."/>
            <person name="Durkin A.S."/>
            <person name="Haft D.H."/>
            <person name="Kolonay J.F."/>
            <person name="Madupu R."/>
            <person name="Peterson J.D."/>
            <person name="Umayam L.A."/>
            <person name="White O."/>
            <person name="Wolf A.M."/>
            <person name="Vamathevan J.J."/>
            <person name="Weidman J.F."/>
            <person name="Impraim M."/>
            <person name="Lee K."/>
            <person name="Berry K.J."/>
            <person name="Lee C."/>
            <person name="Mueller J."/>
            <person name="Khouri H.M."/>
            <person name="Gill J."/>
            <person name="Utterback T.R."/>
            <person name="McDonald L.A."/>
            <person name="Feldblyum T.V."/>
            <person name="Smith H.O."/>
            <person name="Venter J.C."/>
            <person name="Nealson K.H."/>
            <person name="Fraser C.M."/>
        </authorList>
    </citation>
    <scope>NUCLEOTIDE SEQUENCE [LARGE SCALE GENOMIC DNA]</scope>
    <source>
        <strain>ATCC 700550 / JCM 31522 / CIP 106686 / LMG 19005 / NCIMB 14063 / MR-1</strain>
    </source>
</reference>
<feature type="chain" id="PRO_0000177735" description="Peptide chain release factor 1">
    <location>
        <begin position="1"/>
        <end position="363"/>
    </location>
</feature>
<feature type="region of interest" description="Disordered" evidence="2">
    <location>
        <begin position="284"/>
        <end position="306"/>
    </location>
</feature>
<feature type="compositionally biased region" description="Basic and acidic residues" evidence="2">
    <location>
        <begin position="284"/>
        <end position="296"/>
    </location>
</feature>
<feature type="modified residue" description="N5-methylglutamine" evidence="1">
    <location>
        <position position="237"/>
    </location>
</feature>
<name>RF1_SHEON</name>
<evidence type="ECO:0000255" key="1">
    <source>
        <dbReference type="HAMAP-Rule" id="MF_00093"/>
    </source>
</evidence>
<evidence type="ECO:0000256" key="2">
    <source>
        <dbReference type="SAM" id="MobiDB-lite"/>
    </source>
</evidence>